<organism>
    <name type="scientific">Salmonella enteritidis PT4 (strain P125109)</name>
    <dbReference type="NCBI Taxonomy" id="550537"/>
    <lineage>
        <taxon>Bacteria</taxon>
        <taxon>Pseudomonadati</taxon>
        <taxon>Pseudomonadota</taxon>
        <taxon>Gammaproteobacteria</taxon>
        <taxon>Enterobacterales</taxon>
        <taxon>Enterobacteriaceae</taxon>
        <taxon>Salmonella</taxon>
    </lineage>
</organism>
<accession>B5QX62</accession>
<comment type="catalytic activity">
    <reaction evidence="1">
        <text>L-histidine = trans-urocanate + NH4(+)</text>
        <dbReference type="Rhea" id="RHEA:21232"/>
        <dbReference type="ChEBI" id="CHEBI:17771"/>
        <dbReference type="ChEBI" id="CHEBI:28938"/>
        <dbReference type="ChEBI" id="CHEBI:57595"/>
        <dbReference type="EC" id="4.3.1.3"/>
    </reaction>
</comment>
<comment type="pathway">
    <text evidence="1">Amino-acid degradation; L-histidine degradation into L-glutamate; N-formimidoyl-L-glutamate from L-histidine: step 1/3.</text>
</comment>
<comment type="subcellular location">
    <subcellularLocation>
        <location evidence="1">Cytoplasm</location>
    </subcellularLocation>
</comment>
<comment type="PTM">
    <text evidence="1">Contains an active site 4-methylidene-imidazol-5-one (MIO), which is formed autocatalytically by cyclization and dehydration of residues Ala-Ser-Gly.</text>
</comment>
<comment type="similarity">
    <text evidence="1">Belongs to the PAL/histidase family.</text>
</comment>
<proteinExistence type="inferred from homology"/>
<protein>
    <recommendedName>
        <fullName evidence="1">Histidine ammonia-lyase</fullName>
        <shortName evidence="1">Histidase</shortName>
        <ecNumber evidence="1">4.3.1.3</ecNumber>
    </recommendedName>
</protein>
<evidence type="ECO:0000255" key="1">
    <source>
        <dbReference type="HAMAP-Rule" id="MF_00229"/>
    </source>
</evidence>
<sequence length="506" mass="53827">MNTMTLTPGQLSLSQLYDVWRHPVQLRLDASAIDGINASVACVNDIVAEGRTAYGINTGFGLLAQTRIADEDLQNLQRSLVLSHAAGVGDPLDDAMVRLIMVLKINSLARGFSGIRLSVIEALIALVNAGVYPLIPAKGSVGASGDLAPLAHLSLTLLGEGKARWQGEWLPAQTALKKAGLEPVALAAKEGLALLNGTQASTAFALRGLFEAQELFASAVVCGALTTEAVLGSRRPFDARIHAARGQQGQIDVARLFRHLLTDTSAIAESHHHCHKVQDPYSLRCQPQVMGACLTQLRQTKEVLLAEANAVSDNPLVFADAGEVISGGNFHAEPVAMAADNLALAIAEIGALSERRIALMMDKHMSQLPPFLVKNGGVNSGFMIAQVTAAALASENKALAHPHSVDSLPTSANQEDHVSMAPAAGRRLWEMAANTRGIIAVEWLAACQGIDLREGLTSSPLLEQARQTLREQVAHYTQDRFFAPDIECATALLAQGALQRLVPDFM</sequence>
<dbReference type="EC" id="4.3.1.3" evidence="1"/>
<dbReference type="EMBL" id="AM933172">
    <property type="protein sequence ID" value="CAR32322.1"/>
    <property type="molecule type" value="Genomic_DNA"/>
</dbReference>
<dbReference type="RefSeq" id="WP_001095241.1">
    <property type="nucleotide sequence ID" value="NC_011294.1"/>
</dbReference>
<dbReference type="SMR" id="B5QX62"/>
<dbReference type="KEGG" id="set:SEN0736"/>
<dbReference type="HOGENOM" id="CLU_014801_4_0_6"/>
<dbReference type="UniPathway" id="UPA00379">
    <property type="reaction ID" value="UER00549"/>
</dbReference>
<dbReference type="Proteomes" id="UP000000613">
    <property type="component" value="Chromosome"/>
</dbReference>
<dbReference type="GO" id="GO:0005737">
    <property type="term" value="C:cytoplasm"/>
    <property type="evidence" value="ECO:0007669"/>
    <property type="project" value="UniProtKB-SubCell"/>
</dbReference>
<dbReference type="GO" id="GO:0004397">
    <property type="term" value="F:histidine ammonia-lyase activity"/>
    <property type="evidence" value="ECO:0007669"/>
    <property type="project" value="UniProtKB-UniRule"/>
</dbReference>
<dbReference type="GO" id="GO:0019556">
    <property type="term" value="P:L-histidine catabolic process to glutamate and formamide"/>
    <property type="evidence" value="ECO:0007669"/>
    <property type="project" value="UniProtKB-UniPathway"/>
</dbReference>
<dbReference type="GO" id="GO:0019557">
    <property type="term" value="P:L-histidine catabolic process to glutamate and formate"/>
    <property type="evidence" value="ECO:0007669"/>
    <property type="project" value="UniProtKB-UniPathway"/>
</dbReference>
<dbReference type="CDD" id="cd00332">
    <property type="entry name" value="PAL-HAL"/>
    <property type="match status" value="1"/>
</dbReference>
<dbReference type="FunFam" id="1.10.275.10:FF:000005">
    <property type="entry name" value="Histidine ammonia-lyase"/>
    <property type="match status" value="1"/>
</dbReference>
<dbReference type="FunFam" id="1.20.200.10:FF:000003">
    <property type="entry name" value="Histidine ammonia-lyase"/>
    <property type="match status" value="1"/>
</dbReference>
<dbReference type="Gene3D" id="1.20.200.10">
    <property type="entry name" value="Fumarase/aspartase (Central domain)"/>
    <property type="match status" value="1"/>
</dbReference>
<dbReference type="Gene3D" id="1.10.275.10">
    <property type="entry name" value="Fumarase/aspartase (N-terminal domain)"/>
    <property type="match status" value="1"/>
</dbReference>
<dbReference type="HAMAP" id="MF_00229">
    <property type="entry name" value="His_ammonia_lyase"/>
    <property type="match status" value="1"/>
</dbReference>
<dbReference type="InterPro" id="IPR001106">
    <property type="entry name" value="Aromatic_Lyase"/>
</dbReference>
<dbReference type="InterPro" id="IPR024083">
    <property type="entry name" value="Fumarase/histidase_N"/>
</dbReference>
<dbReference type="InterPro" id="IPR005921">
    <property type="entry name" value="HutH"/>
</dbReference>
<dbReference type="InterPro" id="IPR008948">
    <property type="entry name" value="L-Aspartase-like"/>
</dbReference>
<dbReference type="InterPro" id="IPR022313">
    <property type="entry name" value="Phe/His_NH3-lyase_AS"/>
</dbReference>
<dbReference type="NCBIfam" id="TIGR01225">
    <property type="entry name" value="hutH"/>
    <property type="match status" value="1"/>
</dbReference>
<dbReference type="NCBIfam" id="NF006871">
    <property type="entry name" value="PRK09367.1"/>
    <property type="match status" value="1"/>
</dbReference>
<dbReference type="PANTHER" id="PTHR10362">
    <property type="entry name" value="HISTIDINE AMMONIA-LYASE"/>
    <property type="match status" value="1"/>
</dbReference>
<dbReference type="Pfam" id="PF00221">
    <property type="entry name" value="Lyase_aromatic"/>
    <property type="match status" value="1"/>
</dbReference>
<dbReference type="SUPFAM" id="SSF48557">
    <property type="entry name" value="L-aspartase-like"/>
    <property type="match status" value="1"/>
</dbReference>
<dbReference type="PROSITE" id="PS00488">
    <property type="entry name" value="PAL_HISTIDASE"/>
    <property type="match status" value="1"/>
</dbReference>
<keyword id="KW-0963">Cytoplasm</keyword>
<keyword id="KW-0369">Histidine metabolism</keyword>
<keyword id="KW-0456">Lyase</keyword>
<feature type="chain" id="PRO_1000100448" description="Histidine ammonia-lyase">
    <location>
        <begin position="1"/>
        <end position="506"/>
    </location>
</feature>
<feature type="modified residue" description="2,3-didehydroalanine (Ser)" evidence="1">
    <location>
        <position position="144"/>
    </location>
</feature>
<feature type="cross-link" description="5-imidazolinone (Ala-Gly)" evidence="1">
    <location>
        <begin position="143"/>
        <end position="145"/>
    </location>
</feature>
<name>HUTH_SALEP</name>
<reference key="1">
    <citation type="journal article" date="2008" name="Genome Res.">
        <title>Comparative genome analysis of Salmonella enteritidis PT4 and Salmonella gallinarum 287/91 provides insights into evolutionary and host adaptation pathways.</title>
        <authorList>
            <person name="Thomson N.R."/>
            <person name="Clayton D.J."/>
            <person name="Windhorst D."/>
            <person name="Vernikos G."/>
            <person name="Davidson S."/>
            <person name="Churcher C."/>
            <person name="Quail M.A."/>
            <person name="Stevens M."/>
            <person name="Jones M.A."/>
            <person name="Watson M."/>
            <person name="Barron A."/>
            <person name="Layton A."/>
            <person name="Pickard D."/>
            <person name="Kingsley R.A."/>
            <person name="Bignell A."/>
            <person name="Clark L."/>
            <person name="Harris B."/>
            <person name="Ormond D."/>
            <person name="Abdellah Z."/>
            <person name="Brooks K."/>
            <person name="Cherevach I."/>
            <person name="Chillingworth T."/>
            <person name="Woodward J."/>
            <person name="Norberczak H."/>
            <person name="Lord A."/>
            <person name="Arrowsmith C."/>
            <person name="Jagels K."/>
            <person name="Moule S."/>
            <person name="Mungall K."/>
            <person name="Saunders M."/>
            <person name="Whitehead S."/>
            <person name="Chabalgoity J.A."/>
            <person name="Maskell D."/>
            <person name="Humphreys T."/>
            <person name="Roberts M."/>
            <person name="Barrow P.A."/>
            <person name="Dougan G."/>
            <person name="Parkhill J."/>
        </authorList>
    </citation>
    <scope>NUCLEOTIDE SEQUENCE [LARGE SCALE GENOMIC DNA]</scope>
    <source>
        <strain>P125109</strain>
    </source>
</reference>
<gene>
    <name evidence="1" type="primary">hutH</name>
    <name type="ordered locus">SEN0736</name>
</gene>